<evidence type="ECO:0000255" key="1">
    <source>
        <dbReference type="HAMAP-Rule" id="MF_00652"/>
    </source>
</evidence>
<reference key="1">
    <citation type="submission" date="2008-08" db="EMBL/GenBank/DDBJ databases">
        <title>Complete sequence of Vibrio fischeri strain MJ11.</title>
        <authorList>
            <person name="Mandel M.J."/>
            <person name="Stabb E.V."/>
            <person name="Ruby E.G."/>
            <person name="Ferriera S."/>
            <person name="Johnson J."/>
            <person name="Kravitz S."/>
            <person name="Beeson K."/>
            <person name="Sutton G."/>
            <person name="Rogers Y.-H."/>
            <person name="Friedman R."/>
            <person name="Frazier M."/>
            <person name="Venter J.C."/>
        </authorList>
    </citation>
    <scope>NUCLEOTIDE SEQUENCE [LARGE SCALE GENOMIC DNA]</scope>
    <source>
        <strain>MJ11</strain>
    </source>
</reference>
<accession>B5FAJ2</accession>
<feature type="chain" id="PRO_1000131152" description="UPF0246 protein VFMJ11_2214">
    <location>
        <begin position="1"/>
        <end position="259"/>
    </location>
</feature>
<organism>
    <name type="scientific">Aliivibrio fischeri (strain MJ11)</name>
    <name type="common">Vibrio fischeri</name>
    <dbReference type="NCBI Taxonomy" id="388396"/>
    <lineage>
        <taxon>Bacteria</taxon>
        <taxon>Pseudomonadati</taxon>
        <taxon>Pseudomonadota</taxon>
        <taxon>Gammaproteobacteria</taxon>
        <taxon>Vibrionales</taxon>
        <taxon>Vibrionaceae</taxon>
        <taxon>Aliivibrio</taxon>
    </lineage>
</organism>
<comment type="similarity">
    <text evidence="1">Belongs to the UPF0246 family.</text>
</comment>
<protein>
    <recommendedName>
        <fullName evidence="1">UPF0246 protein VFMJ11_2214</fullName>
    </recommendedName>
</protein>
<gene>
    <name type="ordered locus">VFMJ11_2214</name>
</gene>
<sequence length="259" mass="29189">MLIVVSPAKTLDYETPLPTSAFTQPDFISDSAELIKACRTLTPVDIAKLMKVSDKIASLNAVRFEEWSTTFTQENARPALFAFKGDVYTGLDANSLSESEIEYAQTNLRMLSGLYGLLKPLDLMQPYRLEMGTKLENGRGSNLYQFWGSLITNKLNQELEAQGSETLVNLASNEYFKSVKPKELKADIVTPVFKDCKNGQYKVISFYAKKARGLMARFIIQNKISNVEELKSFDSDGYYFVEAESTATTLVFKREEQNK</sequence>
<name>Y2214_ALIFM</name>
<proteinExistence type="inferred from homology"/>
<dbReference type="EMBL" id="CP001139">
    <property type="protein sequence ID" value="ACH65547.1"/>
    <property type="molecule type" value="Genomic_DNA"/>
</dbReference>
<dbReference type="RefSeq" id="WP_012533129.1">
    <property type="nucleotide sequence ID" value="NC_011184.1"/>
</dbReference>
<dbReference type="SMR" id="B5FAJ2"/>
<dbReference type="KEGG" id="vfm:VFMJ11_2214"/>
<dbReference type="HOGENOM" id="CLU_061989_0_0_6"/>
<dbReference type="Proteomes" id="UP000001857">
    <property type="component" value="Chromosome I"/>
</dbReference>
<dbReference type="GO" id="GO:0005829">
    <property type="term" value="C:cytosol"/>
    <property type="evidence" value="ECO:0007669"/>
    <property type="project" value="TreeGrafter"/>
</dbReference>
<dbReference type="GO" id="GO:0033194">
    <property type="term" value="P:response to hydroperoxide"/>
    <property type="evidence" value="ECO:0007669"/>
    <property type="project" value="TreeGrafter"/>
</dbReference>
<dbReference type="HAMAP" id="MF_00652">
    <property type="entry name" value="UPF0246"/>
    <property type="match status" value="1"/>
</dbReference>
<dbReference type="InterPro" id="IPR005583">
    <property type="entry name" value="YaaA"/>
</dbReference>
<dbReference type="NCBIfam" id="NF002541">
    <property type="entry name" value="PRK02101.1-1"/>
    <property type="match status" value="1"/>
</dbReference>
<dbReference type="NCBIfam" id="NF002542">
    <property type="entry name" value="PRK02101.1-3"/>
    <property type="match status" value="1"/>
</dbReference>
<dbReference type="PANTHER" id="PTHR30283:SF4">
    <property type="entry name" value="PEROXIDE STRESS RESISTANCE PROTEIN YAAA"/>
    <property type="match status" value="1"/>
</dbReference>
<dbReference type="PANTHER" id="PTHR30283">
    <property type="entry name" value="PEROXIDE STRESS RESPONSE PROTEIN YAAA"/>
    <property type="match status" value="1"/>
</dbReference>
<dbReference type="Pfam" id="PF03883">
    <property type="entry name" value="H2O2_YaaD"/>
    <property type="match status" value="1"/>
</dbReference>